<name>YVAP_VACCC</name>
<accession>P20525</accession>
<protein>
    <recommendedName>
        <fullName>Uncharacterized 9.9 kDa protein</fullName>
    </recommendedName>
</protein>
<sequence>MKYILYSRCSFSFSFISNHLTPDGPSKIGWLDKGFIISSSTLYFSMTSNVVCETTFPAGKHIPGAGDGNCFVYPSNFDVEKDCLMVFIE</sequence>
<organism>
    <name type="scientific">Vaccinia virus (strain Copenhagen)</name>
    <name type="common">VACV</name>
    <dbReference type="NCBI Taxonomy" id="10249"/>
    <lineage>
        <taxon>Viruses</taxon>
        <taxon>Varidnaviria</taxon>
        <taxon>Bamfordvirae</taxon>
        <taxon>Nucleocytoviricota</taxon>
        <taxon>Pokkesviricetes</taxon>
        <taxon>Chitovirales</taxon>
        <taxon>Poxviridae</taxon>
        <taxon>Chordopoxvirinae</taxon>
        <taxon>Orthopoxvirus</taxon>
        <taxon>Vaccinia virus</taxon>
    </lineage>
</organism>
<proteinExistence type="predicted"/>
<reference key="1">
    <citation type="journal article" date="1990" name="Virology">
        <title>The complete DNA sequence of vaccinia virus.</title>
        <authorList>
            <person name="Goebel S.J."/>
            <person name="Johnson G.P."/>
            <person name="Perkus M.E."/>
            <person name="Davis S.W."/>
            <person name="Winslow J.P."/>
            <person name="Paoletti E."/>
        </authorList>
    </citation>
    <scope>NUCLEOTIDE SEQUENCE [LARGE SCALE GENOMIC DNA]</scope>
</reference>
<reference key="2">
    <citation type="journal article" date="1990" name="Virology">
        <title>Appendix to 'The complete DNA sequence of vaccinia virus'.</title>
        <authorList>
            <person name="Goebel S.J."/>
            <person name="Johnson G.P."/>
            <person name="Perkus M.E."/>
            <person name="Davis S.W."/>
            <person name="Winslow J.P."/>
            <person name="Paoletti E."/>
        </authorList>
    </citation>
    <scope>COMPLETE GENOME</scope>
</reference>
<keyword id="KW-1185">Reference proteome</keyword>
<gene>
    <name type="ORF">A ORF P</name>
</gene>
<organismHost>
    <name type="scientific">Homo sapiens</name>
    <name type="common">Human</name>
    <dbReference type="NCBI Taxonomy" id="9606"/>
</organismHost>
<feature type="chain" id="PRO_0000099659" description="Uncharacterized 9.9 kDa protein">
    <location>
        <begin position="1"/>
        <end position="89"/>
    </location>
</feature>
<dbReference type="EMBL" id="M35027">
    <property type="protein sequence ID" value="AAA48170.1"/>
    <property type="molecule type" value="Genomic_DNA"/>
</dbReference>
<dbReference type="PIR" id="C42525">
    <property type="entry name" value="C42525"/>
</dbReference>
<dbReference type="Proteomes" id="UP000008269">
    <property type="component" value="Segment"/>
</dbReference>